<gene>
    <name type="ordered locus">NT01CX_1819</name>
</gene>
<organism>
    <name type="scientific">Clostridium novyi (strain NT)</name>
    <dbReference type="NCBI Taxonomy" id="386415"/>
    <lineage>
        <taxon>Bacteria</taxon>
        <taxon>Bacillati</taxon>
        <taxon>Bacillota</taxon>
        <taxon>Clostridia</taxon>
        <taxon>Eubacteriales</taxon>
        <taxon>Clostridiaceae</taxon>
        <taxon>Clostridium</taxon>
    </lineage>
</organism>
<comment type="subcellular location">
    <subcellularLocation>
        <location evidence="1">Cytoplasm</location>
    </subcellularLocation>
</comment>
<comment type="similarity">
    <text evidence="1">Belongs to the TACO1 family.</text>
</comment>
<proteinExistence type="inferred from homology"/>
<sequence>MSGHSKWHNIQAKKGKNDAAKGRIFTKIGRELILAARDGGSNPDTNAKLRDVIAKAKAANMPNDTIDRAIKKGAGELEGITYEEIVYEGYAPGGVAVMVKCLTDNRNRSAASVRHKFDKYGGNLGANGCVSYMFQRKGQLVIEKTDEIDEDELMMQALEAGAEDFSAEEEVFEITTDPEDFSAVREELEKNGYTFLEADVTMIPDVMAAVDMETAPKTQKLLDMLEEDDDVQDVYHNAEYPEEFEG</sequence>
<feature type="chain" id="PRO_1000045301" description="Probable transcriptional regulatory protein NT01CX_1819">
    <location>
        <begin position="1"/>
        <end position="246"/>
    </location>
</feature>
<evidence type="ECO:0000255" key="1">
    <source>
        <dbReference type="HAMAP-Rule" id="MF_00693"/>
    </source>
</evidence>
<dbReference type="EMBL" id="CP000382">
    <property type="protein sequence ID" value="ABK61072.1"/>
    <property type="molecule type" value="Genomic_DNA"/>
</dbReference>
<dbReference type="RefSeq" id="WP_011721897.1">
    <property type="nucleotide sequence ID" value="NC_008593.1"/>
</dbReference>
<dbReference type="SMR" id="A0PZU0"/>
<dbReference type="STRING" id="386415.NT01CX_1819"/>
<dbReference type="KEGG" id="cno:NT01CX_1819"/>
<dbReference type="eggNOG" id="COG0217">
    <property type="taxonomic scope" value="Bacteria"/>
</dbReference>
<dbReference type="HOGENOM" id="CLU_062974_2_2_9"/>
<dbReference type="Proteomes" id="UP000008220">
    <property type="component" value="Chromosome"/>
</dbReference>
<dbReference type="GO" id="GO:0005829">
    <property type="term" value="C:cytosol"/>
    <property type="evidence" value="ECO:0007669"/>
    <property type="project" value="TreeGrafter"/>
</dbReference>
<dbReference type="GO" id="GO:0003677">
    <property type="term" value="F:DNA binding"/>
    <property type="evidence" value="ECO:0007669"/>
    <property type="project" value="UniProtKB-UniRule"/>
</dbReference>
<dbReference type="GO" id="GO:0006355">
    <property type="term" value="P:regulation of DNA-templated transcription"/>
    <property type="evidence" value="ECO:0007669"/>
    <property type="project" value="UniProtKB-UniRule"/>
</dbReference>
<dbReference type="FunFam" id="1.10.10.200:FF:000002">
    <property type="entry name" value="Probable transcriptional regulatory protein CLM62_37755"/>
    <property type="match status" value="1"/>
</dbReference>
<dbReference type="FunFam" id="3.30.70.980:FF:000002">
    <property type="entry name" value="Probable transcriptional regulatory protein YebC"/>
    <property type="match status" value="1"/>
</dbReference>
<dbReference type="Gene3D" id="1.10.10.200">
    <property type="match status" value="1"/>
</dbReference>
<dbReference type="Gene3D" id="3.30.70.980">
    <property type="match status" value="2"/>
</dbReference>
<dbReference type="HAMAP" id="MF_00693">
    <property type="entry name" value="Transcrip_reg_TACO1"/>
    <property type="match status" value="1"/>
</dbReference>
<dbReference type="InterPro" id="IPR017856">
    <property type="entry name" value="Integrase-like_N"/>
</dbReference>
<dbReference type="InterPro" id="IPR048300">
    <property type="entry name" value="TACO1_YebC-like_2nd/3rd_dom"/>
</dbReference>
<dbReference type="InterPro" id="IPR049083">
    <property type="entry name" value="TACO1_YebC_N"/>
</dbReference>
<dbReference type="InterPro" id="IPR002876">
    <property type="entry name" value="Transcrip_reg_TACO1-like"/>
</dbReference>
<dbReference type="InterPro" id="IPR026564">
    <property type="entry name" value="Transcrip_reg_TACO1-like_dom3"/>
</dbReference>
<dbReference type="InterPro" id="IPR029072">
    <property type="entry name" value="YebC-like"/>
</dbReference>
<dbReference type="NCBIfam" id="NF001030">
    <property type="entry name" value="PRK00110.1"/>
    <property type="match status" value="1"/>
</dbReference>
<dbReference type="NCBIfam" id="NF009044">
    <property type="entry name" value="PRK12378.1"/>
    <property type="match status" value="1"/>
</dbReference>
<dbReference type="NCBIfam" id="TIGR01033">
    <property type="entry name" value="YebC/PmpR family DNA-binding transcriptional regulator"/>
    <property type="match status" value="1"/>
</dbReference>
<dbReference type="PANTHER" id="PTHR12532:SF6">
    <property type="entry name" value="TRANSCRIPTIONAL REGULATORY PROTEIN YEBC-RELATED"/>
    <property type="match status" value="1"/>
</dbReference>
<dbReference type="PANTHER" id="PTHR12532">
    <property type="entry name" value="TRANSLATIONAL ACTIVATOR OF CYTOCHROME C OXIDASE 1"/>
    <property type="match status" value="1"/>
</dbReference>
<dbReference type="Pfam" id="PF20772">
    <property type="entry name" value="TACO1_YebC_N"/>
    <property type="match status" value="1"/>
</dbReference>
<dbReference type="Pfam" id="PF01709">
    <property type="entry name" value="Transcrip_reg"/>
    <property type="match status" value="1"/>
</dbReference>
<dbReference type="SUPFAM" id="SSF75625">
    <property type="entry name" value="YebC-like"/>
    <property type="match status" value="1"/>
</dbReference>
<protein>
    <recommendedName>
        <fullName evidence="1">Probable transcriptional regulatory protein NT01CX_1819</fullName>
    </recommendedName>
</protein>
<name>Y1819_CLONN</name>
<keyword id="KW-0963">Cytoplasm</keyword>
<keyword id="KW-0238">DNA-binding</keyword>
<keyword id="KW-1185">Reference proteome</keyword>
<keyword id="KW-0804">Transcription</keyword>
<keyword id="KW-0805">Transcription regulation</keyword>
<accession>A0PZU0</accession>
<reference key="1">
    <citation type="journal article" date="2006" name="Nat. Biotechnol.">
        <title>The genome and transcriptomes of the anti-tumor agent Clostridium novyi-NT.</title>
        <authorList>
            <person name="Bettegowda C."/>
            <person name="Huang X."/>
            <person name="Lin J."/>
            <person name="Cheong I."/>
            <person name="Kohli M."/>
            <person name="Szabo S.A."/>
            <person name="Zhang X."/>
            <person name="Diaz L.A. Jr."/>
            <person name="Velculescu V.E."/>
            <person name="Parmigiani G."/>
            <person name="Kinzler K.W."/>
            <person name="Vogelstein B."/>
            <person name="Zhou S."/>
        </authorList>
    </citation>
    <scope>NUCLEOTIDE SEQUENCE [LARGE SCALE GENOMIC DNA]</scope>
    <source>
        <strain>NT</strain>
    </source>
</reference>